<evidence type="ECO:0000250" key="1">
    <source>
        <dbReference type="UniProtKB" id="O55096"/>
    </source>
</evidence>
<evidence type="ECO:0000250" key="2">
    <source>
        <dbReference type="UniProtKB" id="Q9NY33"/>
    </source>
</evidence>
<evidence type="ECO:0000305" key="3"/>
<gene>
    <name type="primary">Dpp3</name>
</gene>
<name>DPP3_MOUSE</name>
<comment type="function">
    <text evidence="2">Cleaves and degrades bioactive peptides, including angiotensin, Leu-enkephalin and Met-enkephalin. Also cleaves Arg-Arg-beta-naphthylamide (in vitro).</text>
</comment>
<comment type="catalytic activity">
    <reaction evidence="2">
        <text>Release of an N-terminal dipeptide from a peptide comprising four or more residues, with broad specificity. Also acts on dipeptidyl 2-naphthylamides.</text>
        <dbReference type="EC" id="3.4.14.4"/>
    </reaction>
</comment>
<comment type="cofactor">
    <cofactor evidence="2">
        <name>Zn(2+)</name>
        <dbReference type="ChEBI" id="CHEBI:29105"/>
    </cofactor>
    <text evidence="2">Binds 1 zinc ion per subunit.</text>
</comment>
<comment type="subcellular location">
    <subcellularLocation>
        <location evidence="2">Cytoplasm</location>
        <location evidence="2">Cytosol</location>
    </subcellularLocation>
</comment>
<comment type="similarity">
    <text evidence="3">Belongs to the peptidase M49 family.</text>
</comment>
<dbReference type="EC" id="3.4.14.4" evidence="2"/>
<dbReference type="EMBL" id="AK031020">
    <property type="protein sequence ID" value="BAC27216.1"/>
    <property type="molecule type" value="mRNA"/>
</dbReference>
<dbReference type="EMBL" id="AK166842">
    <property type="protein sequence ID" value="BAE39063.1"/>
    <property type="molecule type" value="mRNA"/>
</dbReference>
<dbReference type="EMBL" id="BC004600">
    <property type="protein sequence ID" value="AAH04600.1"/>
    <property type="molecule type" value="mRNA"/>
</dbReference>
<dbReference type="CCDS" id="CCDS29443.1"/>
<dbReference type="RefSeq" id="NP_001347640.1">
    <property type="nucleotide sequence ID" value="NM_001360711.1"/>
</dbReference>
<dbReference type="RefSeq" id="NP_598564.2">
    <property type="nucleotide sequence ID" value="NM_133803.2"/>
</dbReference>
<dbReference type="RefSeq" id="XP_006531917.1">
    <property type="nucleotide sequence ID" value="XM_006531854.3"/>
</dbReference>
<dbReference type="SMR" id="Q99KK7"/>
<dbReference type="BioGRID" id="217313">
    <property type="interactions" value="7"/>
</dbReference>
<dbReference type="FunCoup" id="Q99KK7">
    <property type="interactions" value="2502"/>
</dbReference>
<dbReference type="STRING" id="10090.ENSMUSP00000025851"/>
<dbReference type="MEROPS" id="M49.001"/>
<dbReference type="GlyGen" id="Q99KK7">
    <property type="glycosylation" value="2 sites, 1 O-linked glycan (1 site)"/>
</dbReference>
<dbReference type="iPTMnet" id="Q99KK7"/>
<dbReference type="PhosphoSitePlus" id="Q99KK7"/>
<dbReference type="jPOST" id="Q99KK7"/>
<dbReference type="PaxDb" id="10090-ENSMUSP00000025851"/>
<dbReference type="ProteomicsDB" id="277491"/>
<dbReference type="Pumba" id="Q99KK7"/>
<dbReference type="Antibodypedia" id="52373">
    <property type="antibodies" value="447 antibodies from 33 providers"/>
</dbReference>
<dbReference type="DNASU" id="75221"/>
<dbReference type="Ensembl" id="ENSMUST00000025851.4">
    <property type="protein sequence ID" value="ENSMUSP00000025851.4"/>
    <property type="gene ID" value="ENSMUSG00000063904.5"/>
</dbReference>
<dbReference type="GeneID" id="75221"/>
<dbReference type="KEGG" id="mmu:75221"/>
<dbReference type="UCSC" id="uc008gbo.2">
    <property type="organism name" value="mouse"/>
</dbReference>
<dbReference type="AGR" id="MGI:1922471"/>
<dbReference type="CTD" id="10072"/>
<dbReference type="MGI" id="MGI:1922471">
    <property type="gene designation" value="Dpp3"/>
</dbReference>
<dbReference type="VEuPathDB" id="HostDB:ENSMUSG00000063904"/>
<dbReference type="eggNOG" id="KOG3675">
    <property type="taxonomic scope" value="Eukaryota"/>
</dbReference>
<dbReference type="GeneTree" id="ENSGT00390000007335"/>
<dbReference type="HOGENOM" id="CLU_011977_0_0_1"/>
<dbReference type="InParanoid" id="Q99KK7"/>
<dbReference type="OMA" id="QRYWIRD"/>
<dbReference type="OrthoDB" id="4694525at2759"/>
<dbReference type="PhylomeDB" id="Q99KK7"/>
<dbReference type="TreeFam" id="TF300598"/>
<dbReference type="BioGRID-ORCS" id="75221">
    <property type="hits" value="2 hits in 78 CRISPR screens"/>
</dbReference>
<dbReference type="ChiTaRS" id="Dpp3">
    <property type="organism name" value="mouse"/>
</dbReference>
<dbReference type="PRO" id="PR:Q99KK7"/>
<dbReference type="Proteomes" id="UP000000589">
    <property type="component" value="Chromosome 19"/>
</dbReference>
<dbReference type="RNAct" id="Q99KK7">
    <property type="molecule type" value="protein"/>
</dbReference>
<dbReference type="Bgee" id="ENSMUSG00000063904">
    <property type="expression patterns" value="Expressed in yolk sac and 232 other cell types or tissues"/>
</dbReference>
<dbReference type="ExpressionAtlas" id="Q99KK7">
    <property type="expression patterns" value="baseline and differential"/>
</dbReference>
<dbReference type="GO" id="GO:0005829">
    <property type="term" value="C:cytosol"/>
    <property type="evidence" value="ECO:0007669"/>
    <property type="project" value="UniProtKB-SubCell"/>
</dbReference>
<dbReference type="GO" id="GO:0004177">
    <property type="term" value="F:aminopeptidase activity"/>
    <property type="evidence" value="ECO:0007669"/>
    <property type="project" value="UniProtKB-KW"/>
</dbReference>
<dbReference type="GO" id="GO:0008239">
    <property type="term" value="F:dipeptidyl-peptidase activity"/>
    <property type="evidence" value="ECO:0007669"/>
    <property type="project" value="UniProtKB-EC"/>
</dbReference>
<dbReference type="GO" id="GO:0008235">
    <property type="term" value="F:metalloexopeptidase activity"/>
    <property type="evidence" value="ECO:0007669"/>
    <property type="project" value="InterPro"/>
</dbReference>
<dbReference type="GO" id="GO:0008270">
    <property type="term" value="F:zinc ion binding"/>
    <property type="evidence" value="ECO:0007669"/>
    <property type="project" value="Ensembl"/>
</dbReference>
<dbReference type="GO" id="GO:0006508">
    <property type="term" value="P:proteolysis"/>
    <property type="evidence" value="ECO:0007669"/>
    <property type="project" value="UniProtKB-KW"/>
</dbReference>
<dbReference type="FunFam" id="3.30.540.30:FF:000001">
    <property type="entry name" value="Dipeptidyl peptidase 3"/>
    <property type="match status" value="1"/>
</dbReference>
<dbReference type="FunFam" id="3.30.540.30:FF:000002">
    <property type="entry name" value="Dipeptidyl peptidase 3"/>
    <property type="match status" value="1"/>
</dbReference>
<dbReference type="FunFam" id="3.30.540.30:FF:000003">
    <property type="entry name" value="Dipeptidyl peptidase 3"/>
    <property type="match status" value="1"/>
</dbReference>
<dbReference type="Gene3D" id="3.30.540.30">
    <property type="match status" value="3"/>
</dbReference>
<dbReference type="InterPro" id="IPR005317">
    <property type="entry name" value="Dipeptidyl-peptase3"/>
</dbReference>
<dbReference type="InterPro" id="IPR039461">
    <property type="entry name" value="Peptidase_M49"/>
</dbReference>
<dbReference type="PANTHER" id="PTHR23422:SF11">
    <property type="entry name" value="DIPEPTIDYL PEPTIDASE 3"/>
    <property type="match status" value="1"/>
</dbReference>
<dbReference type="PANTHER" id="PTHR23422">
    <property type="entry name" value="DIPEPTIDYL PEPTIDASE III-RELATED"/>
    <property type="match status" value="1"/>
</dbReference>
<dbReference type="Pfam" id="PF03571">
    <property type="entry name" value="Peptidase_M49"/>
    <property type="match status" value="1"/>
</dbReference>
<dbReference type="PIRSF" id="PIRSF007828">
    <property type="entry name" value="Dipeptidyl-peptidase_III"/>
    <property type="match status" value="1"/>
</dbReference>
<keyword id="KW-0007">Acetylation</keyword>
<keyword id="KW-0031">Aminopeptidase</keyword>
<keyword id="KW-0963">Cytoplasm</keyword>
<keyword id="KW-0378">Hydrolase</keyword>
<keyword id="KW-0479">Metal-binding</keyword>
<keyword id="KW-0482">Metalloprotease</keyword>
<keyword id="KW-0645">Protease</keyword>
<keyword id="KW-1185">Reference proteome</keyword>
<keyword id="KW-0862">Zinc</keyword>
<feature type="initiator methionine" description="Removed" evidence="2">
    <location>
        <position position="1"/>
    </location>
</feature>
<feature type="chain" id="PRO_0000078239" description="Dipeptidyl peptidase 3">
    <location>
        <begin position="2"/>
        <end position="738"/>
    </location>
</feature>
<feature type="active site" evidence="1">
    <location>
        <position position="451"/>
    </location>
</feature>
<feature type="binding site" evidence="2">
    <location>
        <position position="450"/>
    </location>
    <ligand>
        <name>Zn(2+)</name>
        <dbReference type="ChEBI" id="CHEBI:29105"/>
        <note>catalytic</note>
    </ligand>
</feature>
<feature type="binding site" evidence="2">
    <location>
        <position position="455"/>
    </location>
    <ligand>
        <name>Zn(2+)</name>
        <dbReference type="ChEBI" id="CHEBI:29105"/>
        <note>catalytic</note>
    </ligand>
</feature>
<feature type="binding site" evidence="2">
    <location>
        <position position="508"/>
    </location>
    <ligand>
        <name>Zn(2+)</name>
        <dbReference type="ChEBI" id="CHEBI:29105"/>
        <note>catalytic</note>
    </ligand>
</feature>
<feature type="modified residue" description="N-acetylalanine" evidence="2">
    <location>
        <position position="2"/>
    </location>
</feature>
<feature type="sequence conflict" description="In Ref. 2; AAH04600." evidence="3" ref="2">
    <original>A</original>
    <variation>V</variation>
    <location>
        <position position="348"/>
    </location>
</feature>
<feature type="sequence conflict" description="In Ref. 2; AAH04600." evidence="3" ref="2">
    <original>L</original>
    <variation>P</variation>
    <location>
        <position position="361"/>
    </location>
</feature>
<feature type="sequence conflict" description="In Ref. 2; AAH04600." evidence="3" ref="2">
    <original>N</original>
    <variation>D</variation>
    <location>
        <position position="728"/>
    </location>
</feature>
<organism>
    <name type="scientific">Mus musculus</name>
    <name type="common">Mouse</name>
    <dbReference type="NCBI Taxonomy" id="10090"/>
    <lineage>
        <taxon>Eukaryota</taxon>
        <taxon>Metazoa</taxon>
        <taxon>Chordata</taxon>
        <taxon>Craniata</taxon>
        <taxon>Vertebrata</taxon>
        <taxon>Euteleostomi</taxon>
        <taxon>Mammalia</taxon>
        <taxon>Eutheria</taxon>
        <taxon>Euarchontoglires</taxon>
        <taxon>Glires</taxon>
        <taxon>Rodentia</taxon>
        <taxon>Myomorpha</taxon>
        <taxon>Muroidea</taxon>
        <taxon>Muridae</taxon>
        <taxon>Murinae</taxon>
        <taxon>Mus</taxon>
        <taxon>Mus</taxon>
    </lineage>
</organism>
<accession>Q99KK7</accession>
<accession>Q8C0I6</accession>
<protein>
    <recommendedName>
        <fullName>Dipeptidyl peptidase 3</fullName>
        <ecNumber evidence="2">3.4.14.4</ecNumber>
    </recommendedName>
    <alternativeName>
        <fullName>Dipeptidyl aminopeptidase III</fullName>
    </alternativeName>
    <alternativeName>
        <fullName>Dipeptidyl arylamidase III</fullName>
    </alternativeName>
    <alternativeName>
        <fullName>Dipeptidyl peptidase III</fullName>
        <shortName>DPP III</shortName>
    </alternativeName>
    <alternativeName>
        <fullName>Enkephalinase B</fullName>
    </alternativeName>
</protein>
<proteinExistence type="evidence at protein level"/>
<reference key="1">
    <citation type="journal article" date="2005" name="Science">
        <title>The transcriptional landscape of the mammalian genome.</title>
        <authorList>
            <person name="Carninci P."/>
            <person name="Kasukawa T."/>
            <person name="Katayama S."/>
            <person name="Gough J."/>
            <person name="Frith M.C."/>
            <person name="Maeda N."/>
            <person name="Oyama R."/>
            <person name="Ravasi T."/>
            <person name="Lenhard B."/>
            <person name="Wells C."/>
            <person name="Kodzius R."/>
            <person name="Shimokawa K."/>
            <person name="Bajic V.B."/>
            <person name="Brenner S.E."/>
            <person name="Batalov S."/>
            <person name="Forrest A.R."/>
            <person name="Zavolan M."/>
            <person name="Davis M.J."/>
            <person name="Wilming L.G."/>
            <person name="Aidinis V."/>
            <person name="Allen J.E."/>
            <person name="Ambesi-Impiombato A."/>
            <person name="Apweiler R."/>
            <person name="Aturaliya R.N."/>
            <person name="Bailey T.L."/>
            <person name="Bansal M."/>
            <person name="Baxter L."/>
            <person name="Beisel K.W."/>
            <person name="Bersano T."/>
            <person name="Bono H."/>
            <person name="Chalk A.M."/>
            <person name="Chiu K.P."/>
            <person name="Choudhary V."/>
            <person name="Christoffels A."/>
            <person name="Clutterbuck D.R."/>
            <person name="Crowe M.L."/>
            <person name="Dalla E."/>
            <person name="Dalrymple B.P."/>
            <person name="de Bono B."/>
            <person name="Della Gatta G."/>
            <person name="di Bernardo D."/>
            <person name="Down T."/>
            <person name="Engstrom P."/>
            <person name="Fagiolini M."/>
            <person name="Faulkner G."/>
            <person name="Fletcher C.F."/>
            <person name="Fukushima T."/>
            <person name="Furuno M."/>
            <person name="Futaki S."/>
            <person name="Gariboldi M."/>
            <person name="Georgii-Hemming P."/>
            <person name="Gingeras T.R."/>
            <person name="Gojobori T."/>
            <person name="Green R.E."/>
            <person name="Gustincich S."/>
            <person name="Harbers M."/>
            <person name="Hayashi Y."/>
            <person name="Hensch T.K."/>
            <person name="Hirokawa N."/>
            <person name="Hill D."/>
            <person name="Huminiecki L."/>
            <person name="Iacono M."/>
            <person name="Ikeo K."/>
            <person name="Iwama A."/>
            <person name="Ishikawa T."/>
            <person name="Jakt M."/>
            <person name="Kanapin A."/>
            <person name="Katoh M."/>
            <person name="Kawasawa Y."/>
            <person name="Kelso J."/>
            <person name="Kitamura H."/>
            <person name="Kitano H."/>
            <person name="Kollias G."/>
            <person name="Krishnan S.P."/>
            <person name="Kruger A."/>
            <person name="Kummerfeld S.K."/>
            <person name="Kurochkin I.V."/>
            <person name="Lareau L.F."/>
            <person name="Lazarevic D."/>
            <person name="Lipovich L."/>
            <person name="Liu J."/>
            <person name="Liuni S."/>
            <person name="McWilliam S."/>
            <person name="Madan Babu M."/>
            <person name="Madera M."/>
            <person name="Marchionni L."/>
            <person name="Matsuda H."/>
            <person name="Matsuzawa S."/>
            <person name="Miki H."/>
            <person name="Mignone F."/>
            <person name="Miyake S."/>
            <person name="Morris K."/>
            <person name="Mottagui-Tabar S."/>
            <person name="Mulder N."/>
            <person name="Nakano N."/>
            <person name="Nakauchi H."/>
            <person name="Ng P."/>
            <person name="Nilsson R."/>
            <person name="Nishiguchi S."/>
            <person name="Nishikawa S."/>
            <person name="Nori F."/>
            <person name="Ohara O."/>
            <person name="Okazaki Y."/>
            <person name="Orlando V."/>
            <person name="Pang K.C."/>
            <person name="Pavan W.J."/>
            <person name="Pavesi G."/>
            <person name="Pesole G."/>
            <person name="Petrovsky N."/>
            <person name="Piazza S."/>
            <person name="Reed J."/>
            <person name="Reid J.F."/>
            <person name="Ring B.Z."/>
            <person name="Ringwald M."/>
            <person name="Rost B."/>
            <person name="Ruan Y."/>
            <person name="Salzberg S.L."/>
            <person name="Sandelin A."/>
            <person name="Schneider C."/>
            <person name="Schoenbach C."/>
            <person name="Sekiguchi K."/>
            <person name="Semple C.A."/>
            <person name="Seno S."/>
            <person name="Sessa L."/>
            <person name="Sheng Y."/>
            <person name="Shibata Y."/>
            <person name="Shimada H."/>
            <person name="Shimada K."/>
            <person name="Silva D."/>
            <person name="Sinclair B."/>
            <person name="Sperling S."/>
            <person name="Stupka E."/>
            <person name="Sugiura K."/>
            <person name="Sultana R."/>
            <person name="Takenaka Y."/>
            <person name="Taki K."/>
            <person name="Tammoja K."/>
            <person name="Tan S.L."/>
            <person name="Tang S."/>
            <person name="Taylor M.S."/>
            <person name="Tegner J."/>
            <person name="Teichmann S.A."/>
            <person name="Ueda H.R."/>
            <person name="van Nimwegen E."/>
            <person name="Verardo R."/>
            <person name="Wei C.L."/>
            <person name="Yagi K."/>
            <person name="Yamanishi H."/>
            <person name="Zabarovsky E."/>
            <person name="Zhu S."/>
            <person name="Zimmer A."/>
            <person name="Hide W."/>
            <person name="Bult C."/>
            <person name="Grimmond S.M."/>
            <person name="Teasdale R.D."/>
            <person name="Liu E.T."/>
            <person name="Brusic V."/>
            <person name="Quackenbush J."/>
            <person name="Wahlestedt C."/>
            <person name="Mattick J.S."/>
            <person name="Hume D.A."/>
            <person name="Kai C."/>
            <person name="Sasaki D."/>
            <person name="Tomaru Y."/>
            <person name="Fukuda S."/>
            <person name="Kanamori-Katayama M."/>
            <person name="Suzuki M."/>
            <person name="Aoki J."/>
            <person name="Arakawa T."/>
            <person name="Iida J."/>
            <person name="Imamura K."/>
            <person name="Itoh M."/>
            <person name="Kato T."/>
            <person name="Kawaji H."/>
            <person name="Kawagashira N."/>
            <person name="Kawashima T."/>
            <person name="Kojima M."/>
            <person name="Kondo S."/>
            <person name="Konno H."/>
            <person name="Nakano K."/>
            <person name="Ninomiya N."/>
            <person name="Nishio T."/>
            <person name="Okada M."/>
            <person name="Plessy C."/>
            <person name="Shibata K."/>
            <person name="Shiraki T."/>
            <person name="Suzuki S."/>
            <person name="Tagami M."/>
            <person name="Waki K."/>
            <person name="Watahiki A."/>
            <person name="Okamura-Oho Y."/>
            <person name="Suzuki H."/>
            <person name="Kawai J."/>
            <person name="Hayashizaki Y."/>
        </authorList>
    </citation>
    <scope>NUCLEOTIDE SEQUENCE [LARGE SCALE MRNA]</scope>
    <source>
        <strain>C57BL/6J</strain>
        <tissue>Thymus</tissue>
    </source>
</reference>
<reference key="2">
    <citation type="journal article" date="2004" name="Genome Res.">
        <title>The status, quality, and expansion of the NIH full-length cDNA project: the Mammalian Gene Collection (MGC).</title>
        <authorList>
            <consortium name="The MGC Project Team"/>
        </authorList>
    </citation>
    <scope>NUCLEOTIDE SEQUENCE [LARGE SCALE MRNA]</scope>
</reference>
<reference key="3">
    <citation type="journal article" date="2010" name="Cell">
        <title>A tissue-specific atlas of mouse protein phosphorylation and expression.</title>
        <authorList>
            <person name="Huttlin E.L."/>
            <person name="Jedrychowski M.P."/>
            <person name="Elias J.E."/>
            <person name="Goswami T."/>
            <person name="Rad R."/>
            <person name="Beausoleil S.A."/>
            <person name="Villen J."/>
            <person name="Haas W."/>
            <person name="Sowa M.E."/>
            <person name="Gygi S.P."/>
        </authorList>
    </citation>
    <scope>IDENTIFICATION BY MASS SPECTROMETRY [LARGE SCALE ANALYSIS]</scope>
    <source>
        <tissue>Brain</tissue>
        <tissue>Brown adipose tissue</tissue>
        <tissue>Heart</tissue>
        <tissue>Kidney</tissue>
        <tissue>Liver</tissue>
        <tissue>Lung</tissue>
        <tissue>Pancreas</tissue>
        <tissue>Spleen</tissue>
        <tissue>Testis</tissue>
    </source>
</reference>
<sequence>MADTQYILPNDIGVSSLDCREAFRLLSPTERLYAHHLSRAAWYGGLAVLLQTSPEAPYIYALLSRLFRAQDPDQLRQHALAEGLTEEEYQAFLVYAAGVYSNMGNYKSFGDTKFVPNLPKDKLGRVILGSKAAQQRPEEVRDLWQTCGDLMFSLEPRLRHLGLGKEGVTTYFSGDCTMEDAKLAQDFLDSQNLSAYNTRLFKVVGQEGKSHYEVRLASVLNTDPALDSELTSKLKRYEFQGNHFQVTRGDYAPILQKVVEHLEKAKAYAANSHQEQMLAQYVESFTQGSIEAHKRGSRFWIQDKGPIVESYIGFIESYRDPFGSRGEFEGFVAMVNKAMSAKFERLVASAEQLLKELPWPLAFEKDKFLTPDFTSLDVLTFAGSGIPAGINIPNYDDLRQTEGFKNVSLGNVLAVAYAAKREKLTFLEEEDKDLYIRWKGPSFDVQVGLHELLGHGSGKLFVQDEKGAFNFDKETVINPETGEQIQSWYRSGETWDSKFSTIASSYEECRAESVGLYLCLNPQVLEIFGFEGADAEDVIYVNWLNMVRAGLLALEFYTPEAANWRQAHMQARFVILRVLLEAGEGLVTVTPTTGSDGRPDARVRLDRSKIRSVGRPALERFLRRLQVLKSTGDVVAGRALYEGYAAVTDAPPECFLTLRDTVLLRKESRKLIVQPNTRLEGSEVQLVEYEASAAGLIRSFCERFPEDGPELEEVLIQLAAADARFWRNQAQEAPPGQA</sequence>